<keyword id="KW-0963">Cytoplasm</keyword>
<keyword id="KW-0489">Methyltransferase</keyword>
<keyword id="KW-1185">Reference proteome</keyword>
<keyword id="KW-0698">rRNA processing</keyword>
<keyword id="KW-0949">S-adenosyl-L-methionine</keyword>
<keyword id="KW-0808">Transferase</keyword>
<comment type="function">
    <text evidence="1">Specifically methylates the pseudouridine at position 1915 (m3Psi1915) in 23S rRNA.</text>
</comment>
<comment type="catalytic activity">
    <reaction evidence="1">
        <text>pseudouridine(1915) in 23S rRNA + S-adenosyl-L-methionine = N(3)-methylpseudouridine(1915) in 23S rRNA + S-adenosyl-L-homocysteine + H(+)</text>
        <dbReference type="Rhea" id="RHEA:42752"/>
        <dbReference type="Rhea" id="RHEA-COMP:10221"/>
        <dbReference type="Rhea" id="RHEA-COMP:10222"/>
        <dbReference type="ChEBI" id="CHEBI:15378"/>
        <dbReference type="ChEBI" id="CHEBI:57856"/>
        <dbReference type="ChEBI" id="CHEBI:59789"/>
        <dbReference type="ChEBI" id="CHEBI:65314"/>
        <dbReference type="ChEBI" id="CHEBI:74486"/>
        <dbReference type="EC" id="2.1.1.177"/>
    </reaction>
</comment>
<comment type="subunit">
    <text evidence="1">Homodimer.</text>
</comment>
<comment type="subcellular location">
    <subcellularLocation>
        <location evidence="1">Cytoplasm</location>
    </subcellularLocation>
</comment>
<comment type="similarity">
    <text evidence="1">Belongs to the RNA methyltransferase RlmH family.</text>
</comment>
<accession>A5IXW4</accession>
<evidence type="ECO:0000255" key="1">
    <source>
        <dbReference type="HAMAP-Rule" id="MF_00658"/>
    </source>
</evidence>
<organism>
    <name type="scientific">Mycoplasmopsis agalactiae (strain NCTC 10123 / CIP 59.7 / PG2)</name>
    <name type="common">Mycoplasma agalactiae</name>
    <dbReference type="NCBI Taxonomy" id="347257"/>
    <lineage>
        <taxon>Bacteria</taxon>
        <taxon>Bacillati</taxon>
        <taxon>Mycoplasmatota</taxon>
        <taxon>Mycoplasmoidales</taxon>
        <taxon>Metamycoplasmataceae</taxon>
        <taxon>Mycoplasmopsis</taxon>
    </lineage>
</organism>
<dbReference type="EC" id="2.1.1.177" evidence="1"/>
<dbReference type="EMBL" id="CU179680">
    <property type="protein sequence ID" value="CAL58873.1"/>
    <property type="molecule type" value="Genomic_DNA"/>
</dbReference>
<dbReference type="RefSeq" id="WP_011949355.1">
    <property type="nucleotide sequence ID" value="NC_009497.1"/>
</dbReference>
<dbReference type="SMR" id="A5IXW4"/>
<dbReference type="STRING" id="347257.MAG1750"/>
<dbReference type="GeneID" id="93357934"/>
<dbReference type="KEGG" id="maa:MAG1750"/>
<dbReference type="HOGENOM" id="CLU_100552_0_0_14"/>
<dbReference type="Proteomes" id="UP000007065">
    <property type="component" value="Chromosome"/>
</dbReference>
<dbReference type="GO" id="GO:0005737">
    <property type="term" value="C:cytoplasm"/>
    <property type="evidence" value="ECO:0007669"/>
    <property type="project" value="UniProtKB-SubCell"/>
</dbReference>
<dbReference type="GO" id="GO:0070038">
    <property type="term" value="F:rRNA (pseudouridine-N3-)-methyltransferase activity"/>
    <property type="evidence" value="ECO:0007669"/>
    <property type="project" value="UniProtKB-UniRule"/>
</dbReference>
<dbReference type="CDD" id="cd18081">
    <property type="entry name" value="RlmH-like"/>
    <property type="match status" value="1"/>
</dbReference>
<dbReference type="Gene3D" id="3.40.1280.10">
    <property type="match status" value="1"/>
</dbReference>
<dbReference type="HAMAP" id="MF_00658">
    <property type="entry name" value="23SrRNA_methyltr_H"/>
    <property type="match status" value="1"/>
</dbReference>
<dbReference type="InterPro" id="IPR029028">
    <property type="entry name" value="Alpha/beta_knot_MTases"/>
</dbReference>
<dbReference type="InterPro" id="IPR003742">
    <property type="entry name" value="RlmH-like"/>
</dbReference>
<dbReference type="InterPro" id="IPR029026">
    <property type="entry name" value="tRNA_m1G_MTases_N"/>
</dbReference>
<dbReference type="PANTHER" id="PTHR33603">
    <property type="entry name" value="METHYLTRANSFERASE"/>
    <property type="match status" value="1"/>
</dbReference>
<dbReference type="PANTHER" id="PTHR33603:SF1">
    <property type="entry name" value="RIBOSOMAL RNA LARGE SUBUNIT METHYLTRANSFERASE H"/>
    <property type="match status" value="1"/>
</dbReference>
<dbReference type="Pfam" id="PF02590">
    <property type="entry name" value="SPOUT_MTase"/>
    <property type="match status" value="1"/>
</dbReference>
<dbReference type="PIRSF" id="PIRSF004505">
    <property type="entry name" value="MT_bac"/>
    <property type="match status" value="1"/>
</dbReference>
<dbReference type="SUPFAM" id="SSF75217">
    <property type="entry name" value="alpha/beta knot"/>
    <property type="match status" value="1"/>
</dbReference>
<reference key="1">
    <citation type="journal article" date="2007" name="PLoS Genet.">
        <title>Being pathogenic, plastic, and sexual while living with a nearly minimal bacterial genome.</title>
        <authorList>
            <person name="Sirand-Pugnet P."/>
            <person name="Lartigue C."/>
            <person name="Marenda M."/>
            <person name="Jacob D."/>
            <person name="Barre A."/>
            <person name="Barbe V."/>
            <person name="Schenowitz C."/>
            <person name="Mangenot S."/>
            <person name="Couloux A."/>
            <person name="Segurens B."/>
            <person name="de Daruvar A."/>
            <person name="Blanchard A."/>
            <person name="Citti C."/>
        </authorList>
    </citation>
    <scope>NUCLEOTIDE SEQUENCE [LARGE SCALE GENOMIC DNA]</scope>
    <source>
        <strain>NCTC 10123 / CIP 59.7 / PG2</strain>
    </source>
</reference>
<proteinExistence type="inferred from homology"/>
<gene>
    <name evidence="1" type="primary">rlmH</name>
    <name type="ordered locus">MAG1750</name>
</gene>
<feature type="chain" id="PRO_0000366624" description="Ribosomal RNA large subunit methyltransferase H">
    <location>
        <begin position="1"/>
        <end position="150"/>
    </location>
</feature>
<feature type="binding site" evidence="1">
    <location>
        <position position="71"/>
    </location>
    <ligand>
        <name>S-adenosyl-L-methionine</name>
        <dbReference type="ChEBI" id="CHEBI:59789"/>
    </ligand>
</feature>
<feature type="binding site" evidence="1">
    <location>
        <position position="100"/>
    </location>
    <ligand>
        <name>S-adenosyl-L-methionine</name>
        <dbReference type="ChEBI" id="CHEBI:59789"/>
    </ligand>
</feature>
<feature type="binding site" evidence="1">
    <location>
        <begin position="118"/>
        <end position="123"/>
    </location>
    <ligand>
        <name>S-adenosyl-L-methionine</name>
        <dbReference type="ChEBI" id="CHEBI:59789"/>
    </ligand>
</feature>
<sequence length="150" mass="17173">MTKIKIVAVGSLSPKFKSLDEEYAKQVGHFCSLSLSELKEFSEEKNIEVKKEKETKLILDALMPNSKVILLSLKGKQIDSIAFSKLIEMNTNQSFTFIIGGSDGVCEEHFESAQKLSFSQMTFPHQLFRIMLIEQIYRAFMILNNSKYHK</sequence>
<name>RLMH_MYCAP</name>
<protein>
    <recommendedName>
        <fullName evidence="1">Ribosomal RNA large subunit methyltransferase H</fullName>
        <ecNumber evidence="1">2.1.1.177</ecNumber>
    </recommendedName>
    <alternativeName>
        <fullName evidence="1">23S rRNA (pseudouridine1915-N3)-methyltransferase</fullName>
    </alternativeName>
    <alternativeName>
        <fullName evidence="1">23S rRNA m3Psi1915 methyltransferase</fullName>
    </alternativeName>
    <alternativeName>
        <fullName evidence="1">rRNA (pseudouridine-N3-)-methyltransferase RlmH</fullName>
    </alternativeName>
</protein>